<name>SECA_FRATF</name>
<comment type="function">
    <text evidence="1">Part of the Sec protein translocase complex. Interacts with the SecYEG preprotein conducting channel. Has a central role in coupling the hydrolysis of ATP to the transfer of proteins into and across the cell membrane, serving both as a receptor for the preprotein-SecB complex and as an ATP-driven molecular motor driving the stepwise translocation of polypeptide chains across the membrane.</text>
</comment>
<comment type="catalytic activity">
    <reaction evidence="1">
        <text>ATP + H2O + cellular proteinSide 1 = ADP + phosphate + cellular proteinSide 2.</text>
        <dbReference type="EC" id="7.4.2.8"/>
    </reaction>
</comment>
<comment type="cofactor">
    <cofactor evidence="1">
        <name>Zn(2+)</name>
        <dbReference type="ChEBI" id="CHEBI:29105"/>
    </cofactor>
    <text evidence="1">May bind 1 zinc ion per subunit.</text>
</comment>
<comment type="subunit">
    <text evidence="1">Monomer and homodimer. Part of the essential Sec protein translocation apparatus which comprises SecA, SecYEG and auxiliary proteins SecDF-YajC and YidC.</text>
</comment>
<comment type="subcellular location">
    <subcellularLocation>
        <location evidence="1">Cell inner membrane</location>
        <topology evidence="1">Peripheral membrane protein</topology>
        <orientation evidence="1">Cytoplasmic side</orientation>
    </subcellularLocation>
    <subcellularLocation>
        <location evidence="1">Cytoplasm</location>
    </subcellularLocation>
    <text evidence="1">Distribution is 50-50.</text>
</comment>
<comment type="similarity">
    <text evidence="1">Belongs to the SecA family.</text>
</comment>
<gene>
    <name evidence="1" type="primary">secA</name>
    <name type="ordered locus">FTA_1545</name>
</gene>
<protein>
    <recommendedName>
        <fullName evidence="1">Protein translocase subunit SecA</fullName>
        <ecNumber evidence="1">7.4.2.8</ecNumber>
    </recommendedName>
</protein>
<keyword id="KW-0067">ATP-binding</keyword>
<keyword id="KW-0997">Cell inner membrane</keyword>
<keyword id="KW-1003">Cell membrane</keyword>
<keyword id="KW-0963">Cytoplasm</keyword>
<keyword id="KW-0472">Membrane</keyword>
<keyword id="KW-0479">Metal-binding</keyword>
<keyword id="KW-0547">Nucleotide-binding</keyword>
<keyword id="KW-0653">Protein transport</keyword>
<keyword id="KW-1278">Translocase</keyword>
<keyword id="KW-0811">Translocation</keyword>
<keyword id="KW-0813">Transport</keyword>
<keyword id="KW-0862">Zinc</keyword>
<feature type="chain" id="PRO_0000320813" description="Protein translocase subunit SecA">
    <location>
        <begin position="1"/>
        <end position="906"/>
    </location>
</feature>
<feature type="region of interest" description="Disordered" evidence="2">
    <location>
        <begin position="853"/>
        <end position="906"/>
    </location>
</feature>
<feature type="compositionally biased region" description="Basic and acidic residues" evidence="2">
    <location>
        <begin position="853"/>
        <end position="865"/>
    </location>
</feature>
<feature type="compositionally biased region" description="Basic and acidic residues" evidence="2">
    <location>
        <begin position="877"/>
        <end position="888"/>
    </location>
</feature>
<feature type="compositionally biased region" description="Basic residues" evidence="2">
    <location>
        <begin position="896"/>
        <end position="906"/>
    </location>
</feature>
<feature type="binding site" evidence="1">
    <location>
        <position position="86"/>
    </location>
    <ligand>
        <name>ATP</name>
        <dbReference type="ChEBI" id="CHEBI:30616"/>
    </ligand>
</feature>
<feature type="binding site" evidence="1">
    <location>
        <begin position="104"/>
        <end position="108"/>
    </location>
    <ligand>
        <name>ATP</name>
        <dbReference type="ChEBI" id="CHEBI:30616"/>
    </ligand>
</feature>
<feature type="binding site" evidence="1">
    <location>
        <position position="511"/>
    </location>
    <ligand>
        <name>ATP</name>
        <dbReference type="ChEBI" id="CHEBI:30616"/>
    </ligand>
</feature>
<feature type="binding site" evidence="1">
    <location>
        <position position="890"/>
    </location>
    <ligand>
        <name>Zn(2+)</name>
        <dbReference type="ChEBI" id="CHEBI:29105"/>
    </ligand>
</feature>
<feature type="binding site" evidence="1">
    <location>
        <position position="892"/>
    </location>
    <ligand>
        <name>Zn(2+)</name>
        <dbReference type="ChEBI" id="CHEBI:29105"/>
    </ligand>
</feature>
<feature type="binding site" evidence="1">
    <location>
        <position position="901"/>
    </location>
    <ligand>
        <name>Zn(2+)</name>
        <dbReference type="ChEBI" id="CHEBI:29105"/>
    </ligand>
</feature>
<feature type="binding site" evidence="1">
    <location>
        <position position="902"/>
    </location>
    <ligand>
        <name>Zn(2+)</name>
        <dbReference type="ChEBI" id="CHEBI:29105"/>
    </ligand>
</feature>
<evidence type="ECO:0000255" key="1">
    <source>
        <dbReference type="HAMAP-Rule" id="MF_01382"/>
    </source>
</evidence>
<evidence type="ECO:0000256" key="2">
    <source>
        <dbReference type="SAM" id="MobiDB-lite"/>
    </source>
</evidence>
<reference key="1">
    <citation type="journal article" date="2009" name="PLoS ONE">
        <title>Complete genome sequence of Francisella tularensis subspecies holarctica FTNF002-00.</title>
        <authorList>
            <person name="Barabote R.D."/>
            <person name="Xie G."/>
            <person name="Brettin T.S."/>
            <person name="Hinrichs S.H."/>
            <person name="Fey P.D."/>
            <person name="Jay J.J."/>
            <person name="Engle J.L."/>
            <person name="Godbole S.D."/>
            <person name="Noronha J.M."/>
            <person name="Scheuermann R.H."/>
            <person name="Zhou L.W."/>
            <person name="Lion C."/>
            <person name="Dempsey M.P."/>
        </authorList>
    </citation>
    <scope>NUCLEOTIDE SEQUENCE [LARGE SCALE GENOMIC DNA]</scope>
    <source>
        <strain>FTNF002-00 / FTA</strain>
    </source>
</reference>
<accession>A7NDG7</accession>
<proteinExistence type="inferred from homology"/>
<dbReference type="EC" id="7.4.2.8" evidence="1"/>
<dbReference type="EMBL" id="CP000803">
    <property type="protein sequence ID" value="ABU62020.1"/>
    <property type="molecule type" value="Genomic_DNA"/>
</dbReference>
<dbReference type="RefSeq" id="WP_003016755.1">
    <property type="nucleotide sequence ID" value="NC_009749.1"/>
</dbReference>
<dbReference type="SMR" id="A7NDG7"/>
<dbReference type="KEGG" id="fta:FTA_1545"/>
<dbReference type="HOGENOM" id="CLU_005314_3_0_6"/>
<dbReference type="GO" id="GO:0031522">
    <property type="term" value="C:cell envelope Sec protein transport complex"/>
    <property type="evidence" value="ECO:0007669"/>
    <property type="project" value="TreeGrafter"/>
</dbReference>
<dbReference type="GO" id="GO:0005829">
    <property type="term" value="C:cytosol"/>
    <property type="evidence" value="ECO:0007669"/>
    <property type="project" value="TreeGrafter"/>
</dbReference>
<dbReference type="GO" id="GO:0005886">
    <property type="term" value="C:plasma membrane"/>
    <property type="evidence" value="ECO:0007669"/>
    <property type="project" value="UniProtKB-SubCell"/>
</dbReference>
<dbReference type="GO" id="GO:0005524">
    <property type="term" value="F:ATP binding"/>
    <property type="evidence" value="ECO:0007669"/>
    <property type="project" value="UniProtKB-UniRule"/>
</dbReference>
<dbReference type="GO" id="GO:0046872">
    <property type="term" value="F:metal ion binding"/>
    <property type="evidence" value="ECO:0007669"/>
    <property type="project" value="UniProtKB-KW"/>
</dbReference>
<dbReference type="GO" id="GO:0008564">
    <property type="term" value="F:protein-exporting ATPase activity"/>
    <property type="evidence" value="ECO:0007669"/>
    <property type="project" value="UniProtKB-EC"/>
</dbReference>
<dbReference type="GO" id="GO:0065002">
    <property type="term" value="P:intracellular protein transmembrane transport"/>
    <property type="evidence" value="ECO:0007669"/>
    <property type="project" value="UniProtKB-UniRule"/>
</dbReference>
<dbReference type="GO" id="GO:0017038">
    <property type="term" value="P:protein import"/>
    <property type="evidence" value="ECO:0007669"/>
    <property type="project" value="InterPro"/>
</dbReference>
<dbReference type="GO" id="GO:0006605">
    <property type="term" value="P:protein targeting"/>
    <property type="evidence" value="ECO:0007669"/>
    <property type="project" value="UniProtKB-UniRule"/>
</dbReference>
<dbReference type="GO" id="GO:0043952">
    <property type="term" value="P:protein transport by the Sec complex"/>
    <property type="evidence" value="ECO:0007669"/>
    <property type="project" value="TreeGrafter"/>
</dbReference>
<dbReference type="CDD" id="cd17928">
    <property type="entry name" value="DEXDc_SecA"/>
    <property type="match status" value="1"/>
</dbReference>
<dbReference type="CDD" id="cd18803">
    <property type="entry name" value="SF2_C_secA"/>
    <property type="match status" value="1"/>
</dbReference>
<dbReference type="FunFam" id="3.40.50.300:FF:000113">
    <property type="entry name" value="Preprotein translocase subunit SecA"/>
    <property type="match status" value="1"/>
</dbReference>
<dbReference type="FunFam" id="3.90.1440.10:FF:000001">
    <property type="entry name" value="Preprotein translocase subunit SecA"/>
    <property type="match status" value="1"/>
</dbReference>
<dbReference type="FunFam" id="1.10.3060.10:FF:000003">
    <property type="entry name" value="Protein translocase subunit SecA"/>
    <property type="match status" value="1"/>
</dbReference>
<dbReference type="FunFam" id="3.40.50.300:FF:000334">
    <property type="entry name" value="Protein translocase subunit SecA"/>
    <property type="match status" value="1"/>
</dbReference>
<dbReference type="Gene3D" id="1.10.3060.10">
    <property type="entry name" value="Helical scaffold and wing domains of SecA"/>
    <property type="match status" value="1"/>
</dbReference>
<dbReference type="Gene3D" id="3.40.50.300">
    <property type="entry name" value="P-loop containing nucleotide triphosphate hydrolases"/>
    <property type="match status" value="2"/>
</dbReference>
<dbReference type="Gene3D" id="3.90.1440.10">
    <property type="entry name" value="SecA, preprotein cross-linking domain"/>
    <property type="match status" value="1"/>
</dbReference>
<dbReference type="HAMAP" id="MF_01382">
    <property type="entry name" value="SecA"/>
    <property type="match status" value="1"/>
</dbReference>
<dbReference type="InterPro" id="IPR014001">
    <property type="entry name" value="Helicase_ATP-bd"/>
</dbReference>
<dbReference type="InterPro" id="IPR001650">
    <property type="entry name" value="Helicase_C-like"/>
</dbReference>
<dbReference type="InterPro" id="IPR027417">
    <property type="entry name" value="P-loop_NTPase"/>
</dbReference>
<dbReference type="InterPro" id="IPR004027">
    <property type="entry name" value="SEC_C_motif"/>
</dbReference>
<dbReference type="InterPro" id="IPR000185">
    <property type="entry name" value="SecA"/>
</dbReference>
<dbReference type="InterPro" id="IPR020937">
    <property type="entry name" value="SecA_CS"/>
</dbReference>
<dbReference type="InterPro" id="IPR011115">
    <property type="entry name" value="SecA_DEAD"/>
</dbReference>
<dbReference type="InterPro" id="IPR014018">
    <property type="entry name" value="SecA_motor_DEAD"/>
</dbReference>
<dbReference type="InterPro" id="IPR011130">
    <property type="entry name" value="SecA_preprotein_X-link_dom"/>
</dbReference>
<dbReference type="InterPro" id="IPR044722">
    <property type="entry name" value="SecA_SF2_C"/>
</dbReference>
<dbReference type="InterPro" id="IPR011116">
    <property type="entry name" value="SecA_Wing/Scaffold"/>
</dbReference>
<dbReference type="InterPro" id="IPR036266">
    <property type="entry name" value="SecA_Wing/Scaffold_sf"/>
</dbReference>
<dbReference type="InterPro" id="IPR036670">
    <property type="entry name" value="SecA_X-link_sf"/>
</dbReference>
<dbReference type="NCBIfam" id="NF009538">
    <property type="entry name" value="PRK12904.1"/>
    <property type="match status" value="1"/>
</dbReference>
<dbReference type="NCBIfam" id="TIGR00963">
    <property type="entry name" value="secA"/>
    <property type="match status" value="1"/>
</dbReference>
<dbReference type="PANTHER" id="PTHR30612:SF0">
    <property type="entry name" value="CHLOROPLAST PROTEIN-TRANSPORTING ATPASE"/>
    <property type="match status" value="1"/>
</dbReference>
<dbReference type="PANTHER" id="PTHR30612">
    <property type="entry name" value="SECA INNER MEMBRANE COMPONENT OF SEC PROTEIN SECRETION SYSTEM"/>
    <property type="match status" value="1"/>
</dbReference>
<dbReference type="Pfam" id="PF21090">
    <property type="entry name" value="P-loop_SecA"/>
    <property type="match status" value="1"/>
</dbReference>
<dbReference type="Pfam" id="PF02810">
    <property type="entry name" value="SEC-C"/>
    <property type="match status" value="1"/>
</dbReference>
<dbReference type="Pfam" id="PF07517">
    <property type="entry name" value="SecA_DEAD"/>
    <property type="match status" value="1"/>
</dbReference>
<dbReference type="Pfam" id="PF01043">
    <property type="entry name" value="SecA_PP_bind"/>
    <property type="match status" value="1"/>
</dbReference>
<dbReference type="Pfam" id="PF07516">
    <property type="entry name" value="SecA_SW"/>
    <property type="match status" value="1"/>
</dbReference>
<dbReference type="PRINTS" id="PR00906">
    <property type="entry name" value="SECA"/>
</dbReference>
<dbReference type="SMART" id="SM00957">
    <property type="entry name" value="SecA_DEAD"/>
    <property type="match status" value="1"/>
</dbReference>
<dbReference type="SMART" id="SM00958">
    <property type="entry name" value="SecA_PP_bind"/>
    <property type="match status" value="1"/>
</dbReference>
<dbReference type="SUPFAM" id="SSF81886">
    <property type="entry name" value="Helical scaffold and wing domains of SecA"/>
    <property type="match status" value="1"/>
</dbReference>
<dbReference type="SUPFAM" id="SSF52540">
    <property type="entry name" value="P-loop containing nucleoside triphosphate hydrolases"/>
    <property type="match status" value="2"/>
</dbReference>
<dbReference type="SUPFAM" id="SSF81767">
    <property type="entry name" value="Pre-protein crosslinking domain of SecA"/>
    <property type="match status" value="1"/>
</dbReference>
<dbReference type="PROSITE" id="PS01312">
    <property type="entry name" value="SECA"/>
    <property type="match status" value="1"/>
</dbReference>
<dbReference type="PROSITE" id="PS51196">
    <property type="entry name" value="SECA_MOTOR_DEAD"/>
    <property type="match status" value="1"/>
</dbReference>
<sequence>MLSLVQKIIGSRNERFIKKVSRIVQKINSLEPEFEKLSDEQLKAKTFEYRERLANGEILDNLLPEAFATVREAGKRTKNMRHYDVQLIGGIVLHQGKVAEMKTGEGKTLVATLPAYLNALTGDGVHVITVNDYLAKRDAELMSDIYEFLGMSVGVIVADLNPQQRKEAYACDITYGTNNEFGFDYLRDNMAYEKEQQVQRSRNYVIIDEVDSILIDEARTPLIISGASDDSSEMYNLFNRLVPYLEKQEKEEVENEQEQRDFYVDEKSKNAYLTEKGYAKIENMLKKEGILEEDDNLYSPHNITKMHYLNACLRAHSLYQLNIDYIVRDQEIVIIDESTGRAMPGRRWSDGLHQAIEAKEGVKINAENQTMASITFQNFFKLYNKIAGMTGTADTEAFELHSIYGLEVIIIPTNKPMIRKDHHDEIYGSVREKFDAIVEDIKERISKGQPVLVGTASIEASEVLSTLLKKKKIRHNVLNAKQHEKEASIIAMAGYPDNVTIATNMAGRGTDIILGGNLEVEIAQLEDPTPEDIAQIKAEWLKRNEAVKKAGGLCIIGSERHDSRRIDNQLRGRAARQGDPGESKFYLSMDDNLLRIFASQSMAERVKKGLKGGESLAFGFMSKVISKAQGKVESYHFDIRKNLLEYDNVVNTQRKVIYEQRQSFLEAEDVSDILADIRIDVAEQLFHDYVSAGSMHELWDLEGLEKALKSDFMIELDLQKLYEEDDSLGEEDLKRLVREAIEIEFVEKTKNLDSGAVRQFEKFSLLQSLDTHWREHLSSIDHLRNSINLRGYAQKDPKNEYKKEAFELFSTMLDNFKYEVISSLAKIRIATEEETQRAQQEWQESMSDIKAEHESVIDNNQRHDEDEQEEAPKVQQVRREGPKVKRNDPCPCGSGKKYKQCHGKVE</sequence>
<organism>
    <name type="scientific">Francisella tularensis subsp. holarctica (strain FTNF002-00 / FTA)</name>
    <dbReference type="NCBI Taxonomy" id="458234"/>
    <lineage>
        <taxon>Bacteria</taxon>
        <taxon>Pseudomonadati</taxon>
        <taxon>Pseudomonadota</taxon>
        <taxon>Gammaproteobacteria</taxon>
        <taxon>Thiotrichales</taxon>
        <taxon>Francisellaceae</taxon>
        <taxon>Francisella</taxon>
    </lineage>
</organism>